<organism>
    <name type="scientific">Neisseria gonorrhoeae (strain NCCP11945)</name>
    <dbReference type="NCBI Taxonomy" id="521006"/>
    <lineage>
        <taxon>Bacteria</taxon>
        <taxon>Pseudomonadati</taxon>
        <taxon>Pseudomonadota</taxon>
        <taxon>Betaproteobacteria</taxon>
        <taxon>Neisseriales</taxon>
        <taxon>Neisseriaceae</taxon>
        <taxon>Neisseria</taxon>
    </lineage>
</organism>
<protein>
    <recommendedName>
        <fullName evidence="1">Anhydro-N-acetylmuramic acid kinase</fullName>
        <ecNumber evidence="1">2.7.1.170</ecNumber>
    </recommendedName>
    <alternativeName>
        <fullName evidence="1">AnhMurNAc kinase</fullName>
    </alternativeName>
</protein>
<comment type="function">
    <text evidence="1">Catalyzes the specific phosphorylation of 1,6-anhydro-N-acetylmuramic acid (anhMurNAc) with the simultaneous cleavage of the 1,6-anhydro ring, generating MurNAc-6-P. Is required for the utilization of anhMurNAc either imported from the medium or derived from its own cell wall murein, and thus plays a role in cell wall recycling.</text>
</comment>
<comment type="catalytic activity">
    <reaction evidence="1">
        <text>1,6-anhydro-N-acetyl-beta-muramate + ATP + H2O = N-acetyl-D-muramate 6-phosphate + ADP + H(+)</text>
        <dbReference type="Rhea" id="RHEA:24952"/>
        <dbReference type="ChEBI" id="CHEBI:15377"/>
        <dbReference type="ChEBI" id="CHEBI:15378"/>
        <dbReference type="ChEBI" id="CHEBI:30616"/>
        <dbReference type="ChEBI" id="CHEBI:58690"/>
        <dbReference type="ChEBI" id="CHEBI:58722"/>
        <dbReference type="ChEBI" id="CHEBI:456216"/>
        <dbReference type="EC" id="2.7.1.170"/>
    </reaction>
</comment>
<comment type="pathway">
    <text evidence="1">Amino-sugar metabolism; 1,6-anhydro-N-acetylmuramate degradation.</text>
</comment>
<comment type="pathway">
    <text evidence="1">Cell wall biogenesis; peptidoglycan recycling.</text>
</comment>
<comment type="similarity">
    <text evidence="1">Belongs to the anhydro-N-acetylmuramic acid kinase family.</text>
</comment>
<feature type="chain" id="PRO_1000140165" description="Anhydro-N-acetylmuramic acid kinase">
    <location>
        <begin position="1"/>
        <end position="376"/>
    </location>
</feature>
<feature type="binding site" evidence="1">
    <location>
        <begin position="22"/>
        <end position="29"/>
    </location>
    <ligand>
        <name>ATP</name>
        <dbReference type="ChEBI" id="CHEBI:30616"/>
    </ligand>
</feature>
<proteinExistence type="inferred from homology"/>
<evidence type="ECO:0000255" key="1">
    <source>
        <dbReference type="HAMAP-Rule" id="MF_01270"/>
    </source>
</evidence>
<keyword id="KW-0067">ATP-binding</keyword>
<keyword id="KW-0119">Carbohydrate metabolism</keyword>
<keyword id="KW-0418">Kinase</keyword>
<keyword id="KW-0547">Nucleotide-binding</keyword>
<keyword id="KW-0808">Transferase</keyword>
<reference key="1">
    <citation type="journal article" date="2008" name="J. Bacteriol.">
        <title>Complete genome sequence of Neisseria gonorrhoeae NCCP11945.</title>
        <authorList>
            <person name="Chung G.T."/>
            <person name="Yoo J.S."/>
            <person name="Oh H.B."/>
            <person name="Lee Y.S."/>
            <person name="Cha S.H."/>
            <person name="Kim S.J."/>
            <person name="Yoo C.K."/>
        </authorList>
    </citation>
    <scope>NUCLEOTIDE SEQUENCE [LARGE SCALE GENOMIC DNA]</scope>
    <source>
        <strain>NCCP11945</strain>
    </source>
</reference>
<accession>B4RQI7</accession>
<sequence length="376" mass="40905">MAFCTSLGVMMETQLYIGIMSGTSMDGADAVLVRMDGGKWLGAEGHAFTPYPDRLRRKLLDLQDTGTDELHRSRMLSQELSRLYAQTAAELLCSQNLAPCDITALGCHGQTVRHAPEHGYSIQLADLPLLAELTRIFTVGDFRSRDLAAGGQGAPLVPAFHEALFRDDRETRVVLNIGGIANISVLPPGAPAFGFDTGPGNMLMDAWTQAHWQLPYDKNGAKAAQGNILPQLLGRLLAHPYFSQPHPKSTGRELFALNWLETYLDGGENRYDVLRTLSRFTAQTVCDAVSHAAADARQMYICGGGIRNPVLMADLAECFGTRVSLHSTAELNLDPQWVEAAAFAWLAACWINRIPGSPHKATGASKPCILGAGYYY</sequence>
<gene>
    <name evidence="1" type="primary">anmK</name>
    <name type="ordered locus">NGK_1884</name>
</gene>
<name>ANMK_NEIG2</name>
<dbReference type="EC" id="2.7.1.170" evidence="1"/>
<dbReference type="EMBL" id="CP001050">
    <property type="protein sequence ID" value="ACF30522.1"/>
    <property type="molecule type" value="Genomic_DNA"/>
</dbReference>
<dbReference type="SMR" id="B4RQI7"/>
<dbReference type="KEGG" id="ngk:NGK_1884"/>
<dbReference type="HOGENOM" id="CLU_038782_0_0_4"/>
<dbReference type="UniPathway" id="UPA00343"/>
<dbReference type="UniPathway" id="UPA00544"/>
<dbReference type="Proteomes" id="UP000002564">
    <property type="component" value="Chromosome"/>
</dbReference>
<dbReference type="GO" id="GO:0005524">
    <property type="term" value="F:ATP binding"/>
    <property type="evidence" value="ECO:0007669"/>
    <property type="project" value="UniProtKB-UniRule"/>
</dbReference>
<dbReference type="GO" id="GO:0016301">
    <property type="term" value="F:kinase activity"/>
    <property type="evidence" value="ECO:0007669"/>
    <property type="project" value="UniProtKB-KW"/>
</dbReference>
<dbReference type="GO" id="GO:0016773">
    <property type="term" value="F:phosphotransferase activity, alcohol group as acceptor"/>
    <property type="evidence" value="ECO:0007669"/>
    <property type="project" value="UniProtKB-UniRule"/>
</dbReference>
<dbReference type="GO" id="GO:0097175">
    <property type="term" value="P:1,6-anhydro-N-acetyl-beta-muramic acid catabolic process"/>
    <property type="evidence" value="ECO:0007669"/>
    <property type="project" value="UniProtKB-UniRule"/>
</dbReference>
<dbReference type="GO" id="GO:0006040">
    <property type="term" value="P:amino sugar metabolic process"/>
    <property type="evidence" value="ECO:0007669"/>
    <property type="project" value="InterPro"/>
</dbReference>
<dbReference type="GO" id="GO:0009254">
    <property type="term" value="P:peptidoglycan turnover"/>
    <property type="evidence" value="ECO:0007669"/>
    <property type="project" value="UniProtKB-UniRule"/>
</dbReference>
<dbReference type="CDD" id="cd24050">
    <property type="entry name" value="ASKHA_NBD_ANMK"/>
    <property type="match status" value="1"/>
</dbReference>
<dbReference type="Gene3D" id="3.30.420.40">
    <property type="match status" value="2"/>
</dbReference>
<dbReference type="HAMAP" id="MF_01270">
    <property type="entry name" value="AnhMurNAc_kinase"/>
    <property type="match status" value="1"/>
</dbReference>
<dbReference type="InterPro" id="IPR005338">
    <property type="entry name" value="Anhydro_N_Ac-Mur_kinase"/>
</dbReference>
<dbReference type="InterPro" id="IPR043129">
    <property type="entry name" value="ATPase_NBD"/>
</dbReference>
<dbReference type="NCBIfam" id="NF007139">
    <property type="entry name" value="PRK09585.1-3"/>
    <property type="match status" value="1"/>
</dbReference>
<dbReference type="PANTHER" id="PTHR30605">
    <property type="entry name" value="ANHYDRO-N-ACETYLMURAMIC ACID KINASE"/>
    <property type="match status" value="1"/>
</dbReference>
<dbReference type="PANTHER" id="PTHR30605:SF0">
    <property type="entry name" value="ANHYDRO-N-ACETYLMURAMIC ACID KINASE"/>
    <property type="match status" value="1"/>
</dbReference>
<dbReference type="Pfam" id="PF03702">
    <property type="entry name" value="AnmK"/>
    <property type="match status" value="1"/>
</dbReference>
<dbReference type="SUPFAM" id="SSF53067">
    <property type="entry name" value="Actin-like ATPase domain"/>
    <property type="match status" value="1"/>
</dbReference>